<organism>
    <name type="scientific">Corynebacterium efficiens (strain DSM 44549 / YS-314 / AJ 12310 / JCM 11189 / NBRC 100395)</name>
    <dbReference type="NCBI Taxonomy" id="196164"/>
    <lineage>
        <taxon>Bacteria</taxon>
        <taxon>Bacillati</taxon>
        <taxon>Actinomycetota</taxon>
        <taxon>Actinomycetes</taxon>
        <taxon>Mycobacteriales</taxon>
        <taxon>Corynebacteriaceae</taxon>
        <taxon>Corynebacterium</taxon>
    </lineage>
</organism>
<reference key="1">
    <citation type="journal article" date="2003" name="Genome Res.">
        <title>Comparative complete genome sequence analysis of the amino acid replacements responsible for the thermostability of Corynebacterium efficiens.</title>
        <authorList>
            <person name="Nishio Y."/>
            <person name="Nakamura Y."/>
            <person name="Kawarabayasi Y."/>
            <person name="Usuda Y."/>
            <person name="Kimura E."/>
            <person name="Sugimoto S."/>
            <person name="Matsui K."/>
            <person name="Yamagishi A."/>
            <person name="Kikuchi H."/>
            <person name="Ikeo K."/>
            <person name="Gojobori T."/>
        </authorList>
    </citation>
    <scope>NUCLEOTIDE SEQUENCE [LARGE SCALE GENOMIC DNA]</scope>
    <source>
        <strain>DSM 44549 / YS-314 / AJ 12310 / JCM 11189 / NBRC 100395</strain>
    </source>
</reference>
<gene>
    <name evidence="1" type="primary">rplB</name>
    <name type="ordered locus">CE0525</name>
</gene>
<accession>Q8FS77</accession>
<proteinExistence type="inferred from homology"/>
<sequence length="280" mass="31194">MAIRKYKPTTPGRRASSVSMFSEITRSTPEKSLLRPLSKTGGRNSHGHITTRHRGGGHKRRYRVIDFRRNDKDGVLAKVAHIEYDPNRTANIALLHYFDGEKRYIIAPKGLTQGTVVESGANADIKVGNNLPLRNIPTGTTIHNVELKPGAGAKLARSAGSSVQLLGKEGPYAILRMPSTEIRRVDIRCRATVGEVGNADQINIRWGKAGRMRWKGWRPTVRGVVMNPVDHPHGGGEGKTSGGRHPVSPWGQKEGRTRRPKRYSDDMIVRRRRANKNKKR</sequence>
<evidence type="ECO:0000255" key="1">
    <source>
        <dbReference type="HAMAP-Rule" id="MF_01320"/>
    </source>
</evidence>
<evidence type="ECO:0000256" key="2">
    <source>
        <dbReference type="SAM" id="MobiDB-lite"/>
    </source>
</evidence>
<evidence type="ECO:0000305" key="3"/>
<dbReference type="EMBL" id="BA000035">
    <property type="protein sequence ID" value="BAC17335.1"/>
    <property type="molecule type" value="Genomic_DNA"/>
</dbReference>
<dbReference type="RefSeq" id="WP_011075029.1">
    <property type="nucleotide sequence ID" value="NC_004369.1"/>
</dbReference>
<dbReference type="SMR" id="Q8FS77"/>
<dbReference type="STRING" id="196164.gene:10740927"/>
<dbReference type="KEGG" id="cef:CE0525"/>
<dbReference type="eggNOG" id="COG0090">
    <property type="taxonomic scope" value="Bacteria"/>
</dbReference>
<dbReference type="HOGENOM" id="CLU_036235_2_1_11"/>
<dbReference type="OrthoDB" id="9778722at2"/>
<dbReference type="Proteomes" id="UP000001409">
    <property type="component" value="Chromosome"/>
</dbReference>
<dbReference type="GO" id="GO:0015934">
    <property type="term" value="C:large ribosomal subunit"/>
    <property type="evidence" value="ECO:0007669"/>
    <property type="project" value="InterPro"/>
</dbReference>
<dbReference type="GO" id="GO:0019843">
    <property type="term" value="F:rRNA binding"/>
    <property type="evidence" value="ECO:0007669"/>
    <property type="project" value="UniProtKB-UniRule"/>
</dbReference>
<dbReference type="GO" id="GO:0003735">
    <property type="term" value="F:structural constituent of ribosome"/>
    <property type="evidence" value="ECO:0007669"/>
    <property type="project" value="InterPro"/>
</dbReference>
<dbReference type="GO" id="GO:0016740">
    <property type="term" value="F:transferase activity"/>
    <property type="evidence" value="ECO:0007669"/>
    <property type="project" value="InterPro"/>
</dbReference>
<dbReference type="GO" id="GO:0002181">
    <property type="term" value="P:cytoplasmic translation"/>
    <property type="evidence" value="ECO:0007669"/>
    <property type="project" value="TreeGrafter"/>
</dbReference>
<dbReference type="FunFam" id="2.30.30.30:FF:000001">
    <property type="entry name" value="50S ribosomal protein L2"/>
    <property type="match status" value="1"/>
</dbReference>
<dbReference type="FunFam" id="2.40.50.140:FF:000003">
    <property type="entry name" value="50S ribosomal protein L2"/>
    <property type="match status" value="1"/>
</dbReference>
<dbReference type="FunFam" id="4.10.950.10:FF:000001">
    <property type="entry name" value="50S ribosomal protein L2"/>
    <property type="match status" value="1"/>
</dbReference>
<dbReference type="Gene3D" id="2.30.30.30">
    <property type="match status" value="1"/>
</dbReference>
<dbReference type="Gene3D" id="2.40.50.140">
    <property type="entry name" value="Nucleic acid-binding proteins"/>
    <property type="match status" value="1"/>
</dbReference>
<dbReference type="Gene3D" id="4.10.950.10">
    <property type="entry name" value="Ribosomal protein L2, domain 3"/>
    <property type="match status" value="1"/>
</dbReference>
<dbReference type="HAMAP" id="MF_01320_B">
    <property type="entry name" value="Ribosomal_uL2_B"/>
    <property type="match status" value="1"/>
</dbReference>
<dbReference type="InterPro" id="IPR012340">
    <property type="entry name" value="NA-bd_OB-fold"/>
</dbReference>
<dbReference type="InterPro" id="IPR014722">
    <property type="entry name" value="Rib_uL2_dom2"/>
</dbReference>
<dbReference type="InterPro" id="IPR002171">
    <property type="entry name" value="Ribosomal_uL2"/>
</dbReference>
<dbReference type="InterPro" id="IPR005880">
    <property type="entry name" value="Ribosomal_uL2_bac/org-type"/>
</dbReference>
<dbReference type="InterPro" id="IPR022669">
    <property type="entry name" value="Ribosomal_uL2_C"/>
</dbReference>
<dbReference type="InterPro" id="IPR022671">
    <property type="entry name" value="Ribosomal_uL2_CS"/>
</dbReference>
<dbReference type="InterPro" id="IPR014726">
    <property type="entry name" value="Ribosomal_uL2_dom3"/>
</dbReference>
<dbReference type="InterPro" id="IPR022666">
    <property type="entry name" value="Ribosomal_uL2_RNA-bd_dom"/>
</dbReference>
<dbReference type="InterPro" id="IPR008991">
    <property type="entry name" value="Translation_prot_SH3-like_sf"/>
</dbReference>
<dbReference type="NCBIfam" id="TIGR01171">
    <property type="entry name" value="rplB_bact"/>
    <property type="match status" value="1"/>
</dbReference>
<dbReference type="PANTHER" id="PTHR13691:SF5">
    <property type="entry name" value="LARGE RIBOSOMAL SUBUNIT PROTEIN UL2M"/>
    <property type="match status" value="1"/>
</dbReference>
<dbReference type="PANTHER" id="PTHR13691">
    <property type="entry name" value="RIBOSOMAL PROTEIN L2"/>
    <property type="match status" value="1"/>
</dbReference>
<dbReference type="Pfam" id="PF00181">
    <property type="entry name" value="Ribosomal_L2"/>
    <property type="match status" value="1"/>
</dbReference>
<dbReference type="Pfam" id="PF03947">
    <property type="entry name" value="Ribosomal_L2_C"/>
    <property type="match status" value="1"/>
</dbReference>
<dbReference type="PIRSF" id="PIRSF002158">
    <property type="entry name" value="Ribosomal_L2"/>
    <property type="match status" value="1"/>
</dbReference>
<dbReference type="SMART" id="SM01383">
    <property type="entry name" value="Ribosomal_L2"/>
    <property type="match status" value="1"/>
</dbReference>
<dbReference type="SMART" id="SM01382">
    <property type="entry name" value="Ribosomal_L2_C"/>
    <property type="match status" value="1"/>
</dbReference>
<dbReference type="SUPFAM" id="SSF50249">
    <property type="entry name" value="Nucleic acid-binding proteins"/>
    <property type="match status" value="1"/>
</dbReference>
<dbReference type="SUPFAM" id="SSF50104">
    <property type="entry name" value="Translation proteins SH3-like domain"/>
    <property type="match status" value="1"/>
</dbReference>
<dbReference type="PROSITE" id="PS00467">
    <property type="entry name" value="RIBOSOMAL_L2"/>
    <property type="match status" value="1"/>
</dbReference>
<protein>
    <recommendedName>
        <fullName evidence="1">Large ribosomal subunit protein uL2</fullName>
    </recommendedName>
    <alternativeName>
        <fullName evidence="3">50S ribosomal protein L2</fullName>
    </alternativeName>
</protein>
<name>RL2_COREF</name>
<feature type="chain" id="PRO_0000129555" description="Large ribosomal subunit protein uL2">
    <location>
        <begin position="1"/>
        <end position="280"/>
    </location>
</feature>
<feature type="region of interest" description="Disordered" evidence="2">
    <location>
        <begin position="1"/>
        <end position="20"/>
    </location>
</feature>
<feature type="region of interest" description="Disordered" evidence="2">
    <location>
        <begin position="29"/>
        <end position="58"/>
    </location>
</feature>
<feature type="region of interest" description="Disordered" evidence="2">
    <location>
        <begin position="225"/>
        <end position="280"/>
    </location>
</feature>
<feature type="compositionally biased region" description="Basic residues" evidence="2">
    <location>
        <begin position="45"/>
        <end position="58"/>
    </location>
</feature>
<feature type="compositionally biased region" description="Basic and acidic residues" evidence="2">
    <location>
        <begin position="253"/>
        <end position="269"/>
    </location>
</feature>
<feature type="compositionally biased region" description="Basic residues" evidence="2">
    <location>
        <begin position="270"/>
        <end position="280"/>
    </location>
</feature>
<comment type="function">
    <text evidence="1">One of the primary rRNA binding proteins. Required for association of the 30S and 50S subunits to form the 70S ribosome, for tRNA binding and peptide bond formation. It has been suggested to have peptidyltransferase activity; this is somewhat controversial. Makes several contacts with the 16S rRNA in the 70S ribosome.</text>
</comment>
<comment type="subunit">
    <text evidence="1">Part of the 50S ribosomal subunit. Forms a bridge to the 30S subunit in the 70S ribosome.</text>
</comment>
<comment type="similarity">
    <text evidence="1">Belongs to the universal ribosomal protein uL2 family.</text>
</comment>
<keyword id="KW-1185">Reference proteome</keyword>
<keyword id="KW-0687">Ribonucleoprotein</keyword>
<keyword id="KW-0689">Ribosomal protein</keyword>
<keyword id="KW-0694">RNA-binding</keyword>
<keyword id="KW-0699">rRNA-binding</keyword>